<accession>P13267</accession>
<protein>
    <recommendedName>
        <fullName>DNA polymerase III PolC-type</fullName>
        <shortName>PolIII</shortName>
        <ecNumber>2.7.7.7</ecNumber>
    </recommendedName>
</protein>
<gene>
    <name type="primary">polC</name>
    <name type="synonym">dnaF</name>
    <name type="synonym">mutI</name>
    <name type="ordered locus">BSU16580</name>
</gene>
<evidence type="ECO:0000255" key="1"/>
<evidence type="ECO:0000269" key="2">
    <source>
    </source>
</evidence>
<evidence type="ECO:0000269" key="3">
    <source>
    </source>
</evidence>
<evidence type="ECO:0000305" key="4"/>
<proteinExistence type="evidence at protein level"/>
<organism>
    <name type="scientific">Bacillus subtilis (strain 168)</name>
    <dbReference type="NCBI Taxonomy" id="224308"/>
    <lineage>
        <taxon>Bacteria</taxon>
        <taxon>Bacillati</taxon>
        <taxon>Bacillota</taxon>
        <taxon>Bacilli</taxon>
        <taxon>Bacillales</taxon>
        <taxon>Bacillaceae</taxon>
        <taxon>Bacillus</taxon>
    </lineage>
</organism>
<feature type="chain" id="PRO_0000204573" description="DNA polymerase III PolC-type">
    <location>
        <begin position="1"/>
        <end position="1437"/>
    </location>
</feature>
<feature type="domain" description="Exonuclease">
    <location>
        <begin position="421"/>
        <end position="578"/>
    </location>
</feature>
<feature type="region of interest" description="dNTP polymerization site" evidence="1">
    <location>
        <begin position="613"/>
        <end position="1437"/>
    </location>
</feature>
<feature type="region of interest" description="Contains the active site of the enzyme">
    <location>
        <begin position="1393"/>
        <end position="1437"/>
    </location>
</feature>
<feature type="sequence variant" description="In mutant AZP12.">
    <original>S</original>
    <variation>A</variation>
    <location>
        <position position="1175"/>
    </location>
</feature>
<feature type="mutagenesis site" description="Destroys both polymerase and exonuclease activities." evidence="2">
    <original>E</original>
    <variation>A</variation>
    <location>
        <position position="427"/>
    </location>
</feature>
<feature type="mutagenesis site" description="Destroys exonuclease activity; decreases polymerase activity." evidence="2">
    <original>E</original>
    <variation>Q</variation>
    <location>
        <position position="427"/>
    </location>
</feature>
<feature type="sequence conflict" description="In Ref. 2; AAA22666." evidence="4" ref="2">
    <original>EDQER</original>
    <variation>KTKSW</variation>
    <location>
        <begin position="184"/>
        <end position="188"/>
    </location>
</feature>
<feature type="sequence conflict" description="In Ref. 2; AAA22666." evidence="4" ref="2">
    <original>EW</original>
    <variation>VR</variation>
    <location>
        <begin position="495"/>
        <end position="496"/>
    </location>
</feature>
<feature type="sequence conflict" description="In Ref. 2; AAA22666." evidence="4" ref="2">
    <original>M</original>
    <variation>S</variation>
    <location>
        <position position="829"/>
    </location>
</feature>
<feature type="sequence conflict" description="In Ref. 2; AAA22666." evidence="4" ref="2">
    <original>G</original>
    <variation>E</variation>
    <location>
        <position position="1015"/>
    </location>
</feature>
<feature type="sequence conflict" description="In Ref. 2; AAA22666." evidence="4" ref="2">
    <original>E</original>
    <variation>D</variation>
    <location>
        <position position="1190"/>
    </location>
</feature>
<feature type="sequence conflict" description="In Ref. 2; AAA22666." evidence="4" ref="2">
    <original>LQ</original>
    <variation>FE</variation>
    <location>
        <begin position="1405"/>
        <end position="1406"/>
    </location>
</feature>
<name>DPO3_BACSU</name>
<sequence length="1437" mass="162663">MEQLSVNRRQFQILLQQINMTDDTFMTYFEHGEIKKLTIHKASKSWHFHFQFKSLLPFQIYDTLTTRLTQSFAHIAKVTSSIEVQDAEVSESIVQDYWSRCIEELQGISPPIISLLNQQKPKLKGNKLIVKTKTDTEAAALKNKYSSMIQAEYRQFGFPDLQLDAEIFVSEQEVQKFREQKLAEDQERAMQALIEMEKKDKESDEDQAPSGPLVIGYQIKDNEEIRTLDSIMDEERRITVQGYVFDVETRELKSGRTLCIFKITDYTNSILIKMFAREKEDAALMKSLKKGMWVKARGSIQNDTFVRDLVMIANDVNEIKAKTREDSAPEGEKRVELHLHSPMSQMDAVTGIGKLVEQAKKWGHEAIALTDHAVVQSFPDAYSAAKKHGIKMIYGMEANLVDDGVPIAYNAAHRLLEEETYVVFDVETTGLSAVYDTIIELAAVKVKGGEIIDKFEAFANPHRPLSATIIELTGITDDMLQDAPDVVDVIRDFREWIGDDILVAHNASFDMGFLNVAYKKLLEVEKAKNPVIDTLELGRFLYPEFKNHRLNTLCKKFDIELTQHHRAIYDTEATAYLLLKMLKDAAEKGIQYHDELNENMGQSNAYQRSRPYHATLLAVNSTGLKNLFKLVSLSHIHYFYRVPRIPRSQLEKYREGLLIGSACDRGEVFEGMMQKSPEEVEDIASFYDYLEVQPPEVYRHLLELELVRDEKALKEIIANITKLGEKLNKPVVATGNVHYLNDEDKIYRKILISSQGGANPLNRHELPKVHFRTTDEMLEAFSFLGEEKAKEIVVTNTQKVASLVDDIKPIKDDLYTPKIEGADEEIREMSYQRARSIYGEELPEIVEARIEKELKSIIGHGFAVIYLISHKLVKRSLDDGYLVGSRGSVGSSLVATLTEITEVNPLPPHYVCPECQHSEFFNDGSVGSGFDLPDKTCPHCGTPLKKDGHDIPFETFLGFKGDKVPDIDLNFSGEYQPQAHNYTKVLFGEDNVYRAGTIGTVAEKTAYGYVKGYAGDNNLHMRGAEIDRLVQGCTGVKRTTGQHPGGIIVVPDYMDIYDFSPIQFPADATGSEWKTTHFDFHSIHDNLLKLDILGHDDPTVIRMLQDLSGIDPKTIPTDDPEVMKIFQGTESLGVTEEQIGCKTGTLGIPEFGTRFVRQMLEDTKPTTFSELVQISGLSHGTDVWLGNAQELIHNNICELSEVIGCRDDIMVYLIYQGLEPSLAFKIMEFVRKGKGLTPEWEEEMKNNNVPDWYIDSCKKIKYMFPKAHAAAYVLMAVRIAYFKVHHALLYYAAYFTVRADDFDIDTMIKGSTAIRAVMEDINAKGLDASPKEKNLLTVLELALEMCERGYSFQKVDLYRSSATEFIIDGNSLIPPFNSIPGLGTNAALNIVKAREEGEFLSKEDLQKRGKVSKTILEYLDRHGCLESLPDQNQLSLF</sequence>
<keyword id="KW-0046">Antibiotic resistance</keyword>
<keyword id="KW-0963">Cytoplasm</keyword>
<keyword id="KW-0903">Direct protein sequencing</keyword>
<keyword id="KW-0235">DNA replication</keyword>
<keyword id="KW-0239">DNA-directed DNA polymerase</keyword>
<keyword id="KW-0269">Exonuclease</keyword>
<keyword id="KW-0378">Hydrolase</keyword>
<keyword id="KW-0540">Nuclease</keyword>
<keyword id="KW-0548">Nucleotidyltransferase</keyword>
<keyword id="KW-1185">Reference proteome</keyword>
<keyword id="KW-0808">Transferase</keyword>
<dbReference type="EC" id="2.7.7.7"/>
<dbReference type="EMBL" id="X52116">
    <property type="protein sequence ID" value="CAA36362.1"/>
    <property type="molecule type" value="Genomic_DNA"/>
</dbReference>
<dbReference type="EMBL" id="M22996">
    <property type="protein sequence ID" value="AAA22666.1"/>
    <property type="molecule type" value="Genomic_DNA"/>
</dbReference>
<dbReference type="EMBL" id="AL009126">
    <property type="protein sequence ID" value="CAB13531.1"/>
    <property type="molecule type" value="Genomic_DNA"/>
</dbReference>
<dbReference type="EMBL" id="S55653">
    <property type="protein sequence ID" value="AAP13898.1"/>
    <property type="molecule type" value="Genomic_DNA"/>
</dbReference>
<dbReference type="EMBL" id="M33543">
    <property type="protein sequence ID" value="AAA22667.1"/>
    <property type="molecule type" value="Genomic_DNA"/>
</dbReference>
<dbReference type="EMBL" id="Z18631">
    <property type="status" value="NOT_ANNOTATED_CDS"/>
    <property type="molecule type" value="Genomic_DNA"/>
</dbReference>
<dbReference type="PIR" id="F69680">
    <property type="entry name" value="F69680"/>
</dbReference>
<dbReference type="RefSeq" id="NP_389540.1">
    <property type="nucleotide sequence ID" value="NC_000964.3"/>
</dbReference>
<dbReference type="RefSeq" id="WP_003245843.1">
    <property type="nucleotide sequence ID" value="NZ_OZ025638.1"/>
</dbReference>
<dbReference type="SMR" id="P13267"/>
<dbReference type="FunCoup" id="P13267">
    <property type="interactions" value="88"/>
</dbReference>
<dbReference type="IntAct" id="P13267">
    <property type="interactions" value="3"/>
</dbReference>
<dbReference type="STRING" id="224308.BSU16580"/>
<dbReference type="BindingDB" id="P13267"/>
<dbReference type="ChEMBL" id="CHEMBL3897"/>
<dbReference type="PaxDb" id="224308-BSU16580"/>
<dbReference type="EnsemblBacteria" id="CAB13531">
    <property type="protein sequence ID" value="CAB13531"/>
    <property type="gene ID" value="BSU_16580"/>
</dbReference>
<dbReference type="GeneID" id="939620"/>
<dbReference type="KEGG" id="bsu:BSU16580"/>
<dbReference type="PATRIC" id="fig|224308.179.peg.1799"/>
<dbReference type="eggNOG" id="COG2176">
    <property type="taxonomic scope" value="Bacteria"/>
</dbReference>
<dbReference type="InParanoid" id="P13267"/>
<dbReference type="OrthoDB" id="9804290at2"/>
<dbReference type="PhylomeDB" id="P13267"/>
<dbReference type="BioCyc" id="BSUB:BSU16580-MONOMER"/>
<dbReference type="SABIO-RK" id="P13267"/>
<dbReference type="PRO" id="PR:P13267"/>
<dbReference type="Proteomes" id="UP000001570">
    <property type="component" value="Chromosome"/>
</dbReference>
<dbReference type="GO" id="GO:0005737">
    <property type="term" value="C:cytoplasm"/>
    <property type="evidence" value="ECO:0007669"/>
    <property type="project" value="UniProtKB-UniRule"/>
</dbReference>
<dbReference type="GO" id="GO:0009295">
    <property type="term" value="C:nucleoid"/>
    <property type="evidence" value="ECO:0007669"/>
    <property type="project" value="UniProtKB-SubCell"/>
</dbReference>
<dbReference type="GO" id="GO:0008408">
    <property type="term" value="F:3'-5' exonuclease activity"/>
    <property type="evidence" value="ECO:0007669"/>
    <property type="project" value="UniProtKB-UniRule"/>
</dbReference>
<dbReference type="GO" id="GO:0003677">
    <property type="term" value="F:DNA binding"/>
    <property type="evidence" value="ECO:0007669"/>
    <property type="project" value="UniProtKB-UniRule"/>
</dbReference>
<dbReference type="GO" id="GO:0003887">
    <property type="term" value="F:DNA-directed DNA polymerase activity"/>
    <property type="evidence" value="ECO:0000318"/>
    <property type="project" value="GO_Central"/>
</dbReference>
<dbReference type="GO" id="GO:0006261">
    <property type="term" value="P:DNA-templated DNA replication"/>
    <property type="evidence" value="ECO:0007669"/>
    <property type="project" value="UniProtKB-UniRule"/>
</dbReference>
<dbReference type="GO" id="GO:0046677">
    <property type="term" value="P:response to antibiotic"/>
    <property type="evidence" value="ECO:0007669"/>
    <property type="project" value="UniProtKB-KW"/>
</dbReference>
<dbReference type="CDD" id="cd06127">
    <property type="entry name" value="DEDDh"/>
    <property type="match status" value="1"/>
</dbReference>
<dbReference type="CDD" id="cd07435">
    <property type="entry name" value="PHP_PolIIIA_POLC"/>
    <property type="match status" value="1"/>
</dbReference>
<dbReference type="CDD" id="cd04484">
    <property type="entry name" value="polC_OBF"/>
    <property type="match status" value="1"/>
</dbReference>
<dbReference type="FunFam" id="3.30.420.10:FF:000045">
    <property type="entry name" value="3'-5' exonuclease DinG"/>
    <property type="match status" value="1"/>
</dbReference>
<dbReference type="Gene3D" id="1.10.150.870">
    <property type="match status" value="1"/>
</dbReference>
<dbReference type="Gene3D" id="3.30.1900.20">
    <property type="match status" value="2"/>
</dbReference>
<dbReference type="Gene3D" id="6.10.140.1510">
    <property type="match status" value="1"/>
</dbReference>
<dbReference type="Gene3D" id="3.20.20.140">
    <property type="entry name" value="Metal-dependent hydrolases"/>
    <property type="match status" value="1"/>
</dbReference>
<dbReference type="Gene3D" id="2.40.50.140">
    <property type="entry name" value="Nucleic acid-binding proteins"/>
    <property type="match status" value="1"/>
</dbReference>
<dbReference type="Gene3D" id="1.10.150.700">
    <property type="entry name" value="PolC, middle finger domain"/>
    <property type="match status" value="1"/>
</dbReference>
<dbReference type="Gene3D" id="3.30.420.10">
    <property type="entry name" value="Ribonuclease H-like superfamily/Ribonuclease H"/>
    <property type="match status" value="1"/>
</dbReference>
<dbReference type="HAMAP" id="MF_00356">
    <property type="entry name" value="DNApol_PolC"/>
    <property type="match status" value="1"/>
</dbReference>
<dbReference type="InterPro" id="IPR011708">
    <property type="entry name" value="DNA_pol3_alpha_NTPase_dom"/>
</dbReference>
<dbReference type="InterPro" id="IPR040982">
    <property type="entry name" value="DNA_pol3_finger"/>
</dbReference>
<dbReference type="InterPro" id="IPR024754">
    <property type="entry name" value="DNA_PolC-like_N_II"/>
</dbReference>
<dbReference type="InterPro" id="IPR028112">
    <property type="entry name" value="DNA_PolC-type_N_I"/>
</dbReference>
<dbReference type="InterPro" id="IPR004805">
    <property type="entry name" value="DnaE2/DnaE/PolC"/>
</dbReference>
<dbReference type="InterPro" id="IPR029460">
    <property type="entry name" value="DNAPol_HHH"/>
</dbReference>
<dbReference type="InterPro" id="IPR006054">
    <property type="entry name" value="DnaQ"/>
</dbReference>
<dbReference type="InterPro" id="IPR013520">
    <property type="entry name" value="Exonuclease_RNaseT/DNA_pol3"/>
</dbReference>
<dbReference type="InterPro" id="IPR012340">
    <property type="entry name" value="NA-bd_OB-fold"/>
</dbReference>
<dbReference type="InterPro" id="IPR004365">
    <property type="entry name" value="NA-bd_OB_tRNA"/>
</dbReference>
<dbReference type="InterPro" id="IPR004013">
    <property type="entry name" value="PHP_dom"/>
</dbReference>
<dbReference type="InterPro" id="IPR003141">
    <property type="entry name" value="Pol/His_phosphatase_N"/>
</dbReference>
<dbReference type="InterPro" id="IPR006308">
    <property type="entry name" value="Pol_III_a_PolC-type_gram_pos"/>
</dbReference>
<dbReference type="InterPro" id="IPR044923">
    <property type="entry name" value="PolC_middle_finger_sf"/>
</dbReference>
<dbReference type="InterPro" id="IPR012337">
    <property type="entry name" value="RNaseH-like_sf"/>
</dbReference>
<dbReference type="InterPro" id="IPR036397">
    <property type="entry name" value="RNaseH_sf"/>
</dbReference>
<dbReference type="NCBIfam" id="TIGR00573">
    <property type="entry name" value="dnaq"/>
    <property type="match status" value="1"/>
</dbReference>
<dbReference type="NCBIfam" id="TIGR01405">
    <property type="entry name" value="polC_Gram_pos"/>
    <property type="match status" value="1"/>
</dbReference>
<dbReference type="NCBIfam" id="NF001688">
    <property type="entry name" value="PRK00448.1"/>
    <property type="match status" value="1"/>
</dbReference>
<dbReference type="PANTHER" id="PTHR32294:SF5">
    <property type="entry name" value="DNA POLYMERASE III POLC-TYPE"/>
    <property type="match status" value="1"/>
</dbReference>
<dbReference type="PANTHER" id="PTHR32294">
    <property type="entry name" value="DNA POLYMERASE III SUBUNIT ALPHA"/>
    <property type="match status" value="1"/>
</dbReference>
<dbReference type="Pfam" id="PF14480">
    <property type="entry name" value="DNA_pol3_a_NI"/>
    <property type="match status" value="1"/>
</dbReference>
<dbReference type="Pfam" id="PF11490">
    <property type="entry name" value="DNA_pol3_a_NII"/>
    <property type="match status" value="1"/>
</dbReference>
<dbReference type="Pfam" id="PF07733">
    <property type="entry name" value="DNA_pol3_alpha"/>
    <property type="match status" value="2"/>
</dbReference>
<dbReference type="Pfam" id="PF17657">
    <property type="entry name" value="DNA_pol3_finger"/>
    <property type="match status" value="1"/>
</dbReference>
<dbReference type="Pfam" id="PF14579">
    <property type="entry name" value="HHH_6"/>
    <property type="match status" value="1"/>
</dbReference>
<dbReference type="Pfam" id="PF02811">
    <property type="entry name" value="PHP"/>
    <property type="match status" value="2"/>
</dbReference>
<dbReference type="Pfam" id="PF00929">
    <property type="entry name" value="RNase_T"/>
    <property type="match status" value="1"/>
</dbReference>
<dbReference type="Pfam" id="PF01336">
    <property type="entry name" value="tRNA_anti-codon"/>
    <property type="match status" value="1"/>
</dbReference>
<dbReference type="SMART" id="SM00479">
    <property type="entry name" value="EXOIII"/>
    <property type="match status" value="1"/>
</dbReference>
<dbReference type="SMART" id="SM00481">
    <property type="entry name" value="POLIIIAc"/>
    <property type="match status" value="1"/>
</dbReference>
<dbReference type="SUPFAM" id="SSF50249">
    <property type="entry name" value="Nucleic acid-binding proteins"/>
    <property type="match status" value="1"/>
</dbReference>
<dbReference type="SUPFAM" id="SSF53098">
    <property type="entry name" value="Ribonuclease H-like"/>
    <property type="match status" value="1"/>
</dbReference>
<comment type="function">
    <text>Required for replicative DNA synthesis. This DNA polymerase also exhibits 3' to 5' exonuclease activity.</text>
</comment>
<comment type="catalytic activity">
    <reaction>
        <text>DNA(n) + a 2'-deoxyribonucleoside 5'-triphosphate = DNA(n+1) + diphosphate</text>
        <dbReference type="Rhea" id="RHEA:22508"/>
        <dbReference type="Rhea" id="RHEA-COMP:17339"/>
        <dbReference type="Rhea" id="RHEA-COMP:17340"/>
        <dbReference type="ChEBI" id="CHEBI:33019"/>
        <dbReference type="ChEBI" id="CHEBI:61560"/>
        <dbReference type="ChEBI" id="CHEBI:173112"/>
        <dbReference type="EC" id="2.7.7.7"/>
    </reaction>
</comment>
<comment type="subcellular location">
    <subcellularLocation>
        <location evidence="3">Cytoplasm</location>
        <location evidence="3">Nucleoid</location>
    </subcellularLocation>
    <text evidence="3">Localizes in tight foci to the chromosomal replication center at mid-cell; positioning does not rely on the C-terminus of SSB (ssbA) (PubMed:21170359).</text>
</comment>
<comment type="miscellaneous">
    <text>Mutant azp12 has a form of DNA polymerase III resistant to hydroxyphenylazopyrimidines.</text>
</comment>
<comment type="similarity">
    <text evidence="4">Belongs to the DNA polymerase type-C family. PolC subfamily.</text>
</comment>
<reference key="1">
    <citation type="journal article" date="1991" name="Gene">
        <title>Bacillus subtilis DNA polymerase III: complete sequence, overexpression, and characterization of the polC gene.</title>
        <authorList>
            <person name="Hammond R.A."/>
            <person name="Barnes M.H."/>
            <person name="Mack S.L."/>
            <person name="Mitchener J.A."/>
            <person name="Brown N.C."/>
        </authorList>
    </citation>
    <scope>NUCLEOTIDE SEQUENCE [GENOMIC DNA]</scope>
    <scope>PARTIAL PROTEIN SEQUENCE</scope>
    <source>
        <strain>168 / BD541</strain>
    </source>
</reference>
<reference key="2">
    <citation type="journal article" date="1989" name="Proc. Natl. Acad. Sci. U.S.A.">
        <title>DNA polymerase III gene of Bacillus subtilis.</title>
        <authorList>
            <person name="Sanjanwala B."/>
            <person name="Ganesan A.T."/>
        </authorList>
    </citation>
    <scope>NUCLEOTIDE SEQUENCE [GENOMIC DNA]</scope>
    <source>
        <strain>SB19</strain>
    </source>
</reference>
<reference key="3">
    <citation type="journal article" date="1991" name="Mol. Gen. Genet.">
        <title>Genetic structure and domains of DNA polymerase III of Bacillus subtilis.</title>
        <authorList>
            <person name="Sanjanwala B."/>
            <person name="Ganesan A.T."/>
        </authorList>
    </citation>
    <scope>SEQUENCE REVISION</scope>
</reference>
<reference key="4">
    <citation type="journal article" date="1997" name="Nature">
        <title>The complete genome sequence of the Gram-positive bacterium Bacillus subtilis.</title>
        <authorList>
            <person name="Kunst F."/>
            <person name="Ogasawara N."/>
            <person name="Moszer I."/>
            <person name="Albertini A.M."/>
            <person name="Alloni G."/>
            <person name="Azevedo V."/>
            <person name="Bertero M.G."/>
            <person name="Bessieres P."/>
            <person name="Bolotin A."/>
            <person name="Borchert S."/>
            <person name="Borriss R."/>
            <person name="Boursier L."/>
            <person name="Brans A."/>
            <person name="Braun M."/>
            <person name="Brignell S.C."/>
            <person name="Bron S."/>
            <person name="Brouillet S."/>
            <person name="Bruschi C.V."/>
            <person name="Caldwell B."/>
            <person name="Capuano V."/>
            <person name="Carter N.M."/>
            <person name="Choi S.-K."/>
            <person name="Codani J.-J."/>
            <person name="Connerton I.F."/>
            <person name="Cummings N.J."/>
            <person name="Daniel R.A."/>
            <person name="Denizot F."/>
            <person name="Devine K.M."/>
            <person name="Duesterhoeft A."/>
            <person name="Ehrlich S.D."/>
            <person name="Emmerson P.T."/>
            <person name="Entian K.-D."/>
            <person name="Errington J."/>
            <person name="Fabret C."/>
            <person name="Ferrari E."/>
            <person name="Foulger D."/>
            <person name="Fritz C."/>
            <person name="Fujita M."/>
            <person name="Fujita Y."/>
            <person name="Fuma S."/>
            <person name="Galizzi A."/>
            <person name="Galleron N."/>
            <person name="Ghim S.-Y."/>
            <person name="Glaser P."/>
            <person name="Goffeau A."/>
            <person name="Golightly E.J."/>
            <person name="Grandi G."/>
            <person name="Guiseppi G."/>
            <person name="Guy B.J."/>
            <person name="Haga K."/>
            <person name="Haiech J."/>
            <person name="Harwood C.R."/>
            <person name="Henaut A."/>
            <person name="Hilbert H."/>
            <person name="Holsappel S."/>
            <person name="Hosono S."/>
            <person name="Hullo M.-F."/>
            <person name="Itaya M."/>
            <person name="Jones L.-M."/>
            <person name="Joris B."/>
            <person name="Karamata D."/>
            <person name="Kasahara Y."/>
            <person name="Klaerr-Blanchard M."/>
            <person name="Klein C."/>
            <person name="Kobayashi Y."/>
            <person name="Koetter P."/>
            <person name="Koningstein G."/>
            <person name="Krogh S."/>
            <person name="Kumano M."/>
            <person name="Kurita K."/>
            <person name="Lapidus A."/>
            <person name="Lardinois S."/>
            <person name="Lauber J."/>
            <person name="Lazarevic V."/>
            <person name="Lee S.-M."/>
            <person name="Levine A."/>
            <person name="Liu H."/>
            <person name="Masuda S."/>
            <person name="Mauel C."/>
            <person name="Medigue C."/>
            <person name="Medina N."/>
            <person name="Mellado R.P."/>
            <person name="Mizuno M."/>
            <person name="Moestl D."/>
            <person name="Nakai S."/>
            <person name="Noback M."/>
            <person name="Noone D."/>
            <person name="O'Reilly M."/>
            <person name="Ogawa K."/>
            <person name="Ogiwara A."/>
            <person name="Oudega B."/>
            <person name="Park S.-H."/>
            <person name="Parro V."/>
            <person name="Pohl T.M."/>
            <person name="Portetelle D."/>
            <person name="Porwollik S."/>
            <person name="Prescott A.M."/>
            <person name="Presecan E."/>
            <person name="Pujic P."/>
            <person name="Purnelle B."/>
            <person name="Rapoport G."/>
            <person name="Rey M."/>
            <person name="Reynolds S."/>
            <person name="Rieger M."/>
            <person name="Rivolta C."/>
            <person name="Rocha E."/>
            <person name="Roche B."/>
            <person name="Rose M."/>
            <person name="Sadaie Y."/>
            <person name="Sato T."/>
            <person name="Scanlan E."/>
            <person name="Schleich S."/>
            <person name="Schroeter R."/>
            <person name="Scoffone F."/>
            <person name="Sekiguchi J."/>
            <person name="Sekowska A."/>
            <person name="Seror S.J."/>
            <person name="Serror P."/>
            <person name="Shin B.-S."/>
            <person name="Soldo B."/>
            <person name="Sorokin A."/>
            <person name="Tacconi E."/>
            <person name="Takagi T."/>
            <person name="Takahashi H."/>
            <person name="Takemaru K."/>
            <person name="Takeuchi M."/>
            <person name="Tamakoshi A."/>
            <person name="Tanaka T."/>
            <person name="Terpstra P."/>
            <person name="Tognoni A."/>
            <person name="Tosato V."/>
            <person name="Uchiyama S."/>
            <person name="Vandenbol M."/>
            <person name="Vannier F."/>
            <person name="Vassarotti A."/>
            <person name="Viari A."/>
            <person name="Wambutt R."/>
            <person name="Wedler E."/>
            <person name="Wedler H."/>
            <person name="Weitzenegger T."/>
            <person name="Winters P."/>
            <person name="Wipat A."/>
            <person name="Yamamoto H."/>
            <person name="Yamane K."/>
            <person name="Yasumoto K."/>
            <person name="Yata K."/>
            <person name="Yoshida K."/>
            <person name="Yoshikawa H.-F."/>
            <person name="Zumstein E."/>
            <person name="Yoshikawa H."/>
            <person name="Danchin A."/>
        </authorList>
    </citation>
    <scope>NUCLEOTIDE SEQUENCE [LARGE SCALE GENOMIC DNA]</scope>
    <source>
        <strain>168</strain>
    </source>
</reference>
<reference key="5">
    <citation type="journal article" date="1993" name="Mol. Gen. Genet.">
        <title>Leader region of the gene encoding DNA polymerase III of Bacillus subtilis.</title>
        <authorList>
            <person name="Sanjanwala B."/>
            <person name="Ganesan A.T."/>
        </authorList>
    </citation>
    <scope>NUCLEOTIDE SEQUENCE [GENOMIC DNA] OF 1-55</scope>
    <source>
        <strain>SG64</strain>
    </source>
</reference>
<reference key="6">
    <citation type="journal article" date="1989" name="Gene">
        <title>The cloned polC gene of Bacillus subtilis: characterization of the azp12 mutation and controlled in vitro synthesis of active DNA polymerase III.</title>
        <authorList>
            <person name="Barnes M.H."/>
            <person name="Hammond R.A."/>
            <person name="Foster K.A."/>
            <person name="Mitchener J.A."/>
            <person name="Brown N.C."/>
        </authorList>
    </citation>
    <scope>NUCLEOTIDE SEQUENCE [GENOMIC DNA] OF 1150-1229</scope>
</reference>
<reference key="7">
    <citation type="journal article" date="1993" name="J. Bacteriol.">
        <title>Similar organization of the nusA-infB operon in Bacillus subtilis and Escherichia coli.</title>
        <authorList>
            <person name="Shazand K."/>
            <person name="Tucker J."/>
            <person name="Grunberg-Manago M."/>
            <person name="Rabinowitz J.C."/>
            <person name="Leighton T."/>
        </authorList>
    </citation>
    <scope>NUCLEOTIDE SEQUENCE [GENOMIC DNA] OF 1398-1437</scope>
</reference>
<reference key="8">
    <citation type="journal article" date="1992" name="Gene">
        <title>Localization of the exonuclease and polymerase domains of Bacillus subtilis DNA polymerase III.</title>
        <authorList>
            <person name="Barnes M.H."/>
            <person name="Hammond R.A."/>
            <person name="Kennedy C.S."/>
            <person name="Mack S.L."/>
            <person name="Brown N.C."/>
        </authorList>
    </citation>
    <scope>MUTAGENESIS OF GLU-427</scope>
</reference>
<reference key="9">
    <citation type="journal article" date="2010" name="PLoS Genet.">
        <title>The C-terminal domain of the bacterial SSB protein acts as a DNA maintenance hub at active chromosome replication forks.</title>
        <authorList>
            <person name="Costes A."/>
            <person name="Lecointe F."/>
            <person name="McGovern S."/>
            <person name="Quevillon-Cheruel S."/>
            <person name="Polard P."/>
        </authorList>
    </citation>
    <scope>SUBCELLULAR LOCATION</scope>
    <source>
        <strain>168</strain>
    </source>
</reference>